<feature type="chain" id="PRO_0000382266" description="Glutamate-1-semialdehyde 2,1-aminomutase 2">
    <location>
        <begin position="1"/>
        <end position="429"/>
    </location>
</feature>
<feature type="modified residue" description="N6-(pyridoxal phosphate)lysine" evidence="1">
    <location>
        <position position="268"/>
    </location>
</feature>
<protein>
    <recommendedName>
        <fullName evidence="1">Glutamate-1-semialdehyde 2,1-aminomutase 2</fullName>
        <shortName evidence="1">GSA 2</shortName>
        <ecNumber evidence="1">5.4.3.8</ecNumber>
    </recommendedName>
    <alternativeName>
        <fullName evidence="1">Glutamate-1-semialdehyde aminotransferase 2</fullName>
        <shortName evidence="1">GSA-AT 2</shortName>
    </alternativeName>
</protein>
<reference key="1">
    <citation type="submission" date="2008-10" db="EMBL/GenBank/DDBJ databases">
        <title>Genome sequence of Bacillus cereus AH187.</title>
        <authorList>
            <person name="Dodson R.J."/>
            <person name="Durkin A.S."/>
            <person name="Rosovitz M.J."/>
            <person name="Rasko D.A."/>
            <person name="Kolsto A.B."/>
            <person name="Okstad O.A."/>
            <person name="Ravel J."/>
            <person name="Sutton G."/>
        </authorList>
    </citation>
    <scope>NUCLEOTIDE SEQUENCE [LARGE SCALE GENOMIC DNA]</scope>
    <source>
        <strain>AH187</strain>
    </source>
</reference>
<name>GSA2_BACC7</name>
<proteinExistence type="inferred from homology"/>
<organism>
    <name type="scientific">Bacillus cereus (strain AH187)</name>
    <dbReference type="NCBI Taxonomy" id="405534"/>
    <lineage>
        <taxon>Bacteria</taxon>
        <taxon>Bacillati</taxon>
        <taxon>Bacillota</taxon>
        <taxon>Bacilli</taxon>
        <taxon>Bacillales</taxon>
        <taxon>Bacillaceae</taxon>
        <taxon>Bacillus</taxon>
        <taxon>Bacillus cereus group</taxon>
    </lineage>
</organism>
<dbReference type="EC" id="5.4.3.8" evidence="1"/>
<dbReference type="EMBL" id="CP001177">
    <property type="protein sequence ID" value="ACJ78979.1"/>
    <property type="molecule type" value="Genomic_DNA"/>
</dbReference>
<dbReference type="SMR" id="B7HQM1"/>
<dbReference type="KEGG" id="bcr:BCAH187_A4597"/>
<dbReference type="HOGENOM" id="CLU_016922_1_5_9"/>
<dbReference type="UniPathway" id="UPA00251">
    <property type="reaction ID" value="UER00317"/>
</dbReference>
<dbReference type="Proteomes" id="UP000002214">
    <property type="component" value="Chromosome"/>
</dbReference>
<dbReference type="GO" id="GO:0005737">
    <property type="term" value="C:cytoplasm"/>
    <property type="evidence" value="ECO:0007669"/>
    <property type="project" value="UniProtKB-SubCell"/>
</dbReference>
<dbReference type="GO" id="GO:0042286">
    <property type="term" value="F:glutamate-1-semialdehyde 2,1-aminomutase activity"/>
    <property type="evidence" value="ECO:0007669"/>
    <property type="project" value="UniProtKB-UniRule"/>
</dbReference>
<dbReference type="GO" id="GO:0030170">
    <property type="term" value="F:pyridoxal phosphate binding"/>
    <property type="evidence" value="ECO:0007669"/>
    <property type="project" value="InterPro"/>
</dbReference>
<dbReference type="GO" id="GO:0008483">
    <property type="term" value="F:transaminase activity"/>
    <property type="evidence" value="ECO:0007669"/>
    <property type="project" value="InterPro"/>
</dbReference>
<dbReference type="GO" id="GO:0006782">
    <property type="term" value="P:protoporphyrinogen IX biosynthetic process"/>
    <property type="evidence" value="ECO:0007669"/>
    <property type="project" value="UniProtKB-UniRule"/>
</dbReference>
<dbReference type="CDD" id="cd00610">
    <property type="entry name" value="OAT_like"/>
    <property type="match status" value="1"/>
</dbReference>
<dbReference type="FunFam" id="3.40.640.10:FF:000021">
    <property type="entry name" value="Glutamate-1-semialdehyde 2,1-aminomutase"/>
    <property type="match status" value="1"/>
</dbReference>
<dbReference type="Gene3D" id="3.90.1150.10">
    <property type="entry name" value="Aspartate Aminotransferase, domain 1"/>
    <property type="match status" value="1"/>
</dbReference>
<dbReference type="Gene3D" id="3.40.640.10">
    <property type="entry name" value="Type I PLP-dependent aspartate aminotransferase-like (Major domain)"/>
    <property type="match status" value="1"/>
</dbReference>
<dbReference type="HAMAP" id="MF_00375">
    <property type="entry name" value="HemL_aminotrans_3"/>
    <property type="match status" value="1"/>
</dbReference>
<dbReference type="InterPro" id="IPR004639">
    <property type="entry name" value="4pyrrol_synth_GluAld_NH2Trfase"/>
</dbReference>
<dbReference type="InterPro" id="IPR005814">
    <property type="entry name" value="Aminotrans_3"/>
</dbReference>
<dbReference type="InterPro" id="IPR049704">
    <property type="entry name" value="Aminotrans_3_PPA_site"/>
</dbReference>
<dbReference type="InterPro" id="IPR015424">
    <property type="entry name" value="PyrdxlP-dep_Trfase"/>
</dbReference>
<dbReference type="InterPro" id="IPR015421">
    <property type="entry name" value="PyrdxlP-dep_Trfase_major"/>
</dbReference>
<dbReference type="InterPro" id="IPR015422">
    <property type="entry name" value="PyrdxlP-dep_Trfase_small"/>
</dbReference>
<dbReference type="NCBIfam" id="TIGR00713">
    <property type="entry name" value="hemL"/>
    <property type="match status" value="1"/>
</dbReference>
<dbReference type="NCBIfam" id="NF000818">
    <property type="entry name" value="PRK00062.1"/>
    <property type="match status" value="1"/>
</dbReference>
<dbReference type="PANTHER" id="PTHR43713">
    <property type="entry name" value="GLUTAMATE-1-SEMIALDEHYDE 2,1-AMINOMUTASE"/>
    <property type="match status" value="1"/>
</dbReference>
<dbReference type="PANTHER" id="PTHR43713:SF3">
    <property type="entry name" value="GLUTAMATE-1-SEMIALDEHYDE 2,1-AMINOMUTASE 1, CHLOROPLASTIC-RELATED"/>
    <property type="match status" value="1"/>
</dbReference>
<dbReference type="Pfam" id="PF00202">
    <property type="entry name" value="Aminotran_3"/>
    <property type="match status" value="1"/>
</dbReference>
<dbReference type="SUPFAM" id="SSF53383">
    <property type="entry name" value="PLP-dependent transferases"/>
    <property type="match status" value="1"/>
</dbReference>
<dbReference type="PROSITE" id="PS00600">
    <property type="entry name" value="AA_TRANSFER_CLASS_3"/>
    <property type="match status" value="1"/>
</dbReference>
<accession>B7HQM1</accession>
<comment type="catalytic activity">
    <reaction evidence="1">
        <text>(S)-4-amino-5-oxopentanoate = 5-aminolevulinate</text>
        <dbReference type="Rhea" id="RHEA:14265"/>
        <dbReference type="ChEBI" id="CHEBI:57501"/>
        <dbReference type="ChEBI" id="CHEBI:356416"/>
        <dbReference type="EC" id="5.4.3.8"/>
    </reaction>
</comment>
<comment type="cofactor">
    <cofactor evidence="1">
        <name>pyridoxal 5'-phosphate</name>
        <dbReference type="ChEBI" id="CHEBI:597326"/>
    </cofactor>
</comment>
<comment type="pathway">
    <text evidence="1">Porphyrin-containing compound metabolism; protoporphyrin-IX biosynthesis; 5-aminolevulinate from L-glutamyl-tRNA(Glu): step 2/2.</text>
</comment>
<comment type="subunit">
    <text evidence="1">Homodimer.</text>
</comment>
<comment type="subcellular location">
    <subcellularLocation>
        <location evidence="1">Cytoplasm</location>
    </subcellularLocation>
</comment>
<comment type="similarity">
    <text evidence="1">Belongs to the class-III pyridoxal-phosphate-dependent aminotransferase family. HemL subfamily.</text>
</comment>
<evidence type="ECO:0000255" key="1">
    <source>
        <dbReference type="HAMAP-Rule" id="MF_00375"/>
    </source>
</evidence>
<keyword id="KW-0963">Cytoplasm</keyword>
<keyword id="KW-0413">Isomerase</keyword>
<keyword id="KW-0627">Porphyrin biosynthesis</keyword>
<keyword id="KW-0663">Pyridoxal phosphate</keyword>
<gene>
    <name evidence="1" type="primary">hemL2</name>
    <name type="ordered locus">BCAH187_A4597</name>
</gene>
<sequence length="429" mass="46005">MKKFDKSIAAFEEAQDLMPGGVNSPVRAFKSVGMNPLFMERGKGSKVYDIDGNEYIDYVLSWGPLIHGHANDRVVEALKAVAERGTSFGAPTEIENKLAKLVIERVPSIEIVRMVNSGTEATMSALRLARGYTGRNKILKFIGCYHGHGDSLLIKAGSGVATLGLPDSPGVPEGVAKNTITVAYNDLESVKYAFEQFGDDIACVIVEPVAGNMGVVPPQPGFLEGLREVTEQNGALLIFDEVMTGFRVAYNCGQGYYGVTPDLTCLGKVIGGGLPVGAYGGKAEIMRQVAPSGPIYQAGTLSGNPLAMAAGYETLVQLTPESYVEFERKAEMLEAGLRKAAEKHGIPHHINRAGSMIGIFFTDEPVINYDAAKSSNLEFFAAYYREMVEQGVFLPPSQFEGLFLSTAHSDADIEATIAAAEIAMSKLKA</sequence>